<protein>
    <recommendedName>
        <fullName evidence="1">3-isopropylmalate dehydratase large subunit</fullName>
        <ecNumber evidence="1">4.2.1.33</ecNumber>
    </recommendedName>
    <alternativeName>
        <fullName evidence="1">Alpha-IPM isomerase</fullName>
        <shortName evidence="1">IPMI</shortName>
    </alternativeName>
    <alternativeName>
        <fullName evidence="1">Isopropylmalate isomerase</fullName>
    </alternativeName>
</protein>
<sequence>MAKTLYEKLFDAHVVYEAENETPLLYIDRHLVHEVTSPQAFDGLRAHGRPVRQPGKTFATMDHNVSTQTKDINACGEMARIQMQELIKNCKEFGVELYDLNHPYQGIVHVMGPEQGVTLPGMTIVCGDSHTATHGAFGALAFGIGTSEVEHVLATQTLKQGRAKTMKIEVQGKAAPGITAKDIVLAIIGKTGSAGGTGHVVEFCGEAIRDLSMEGRMTLCNMAIEMGAKAGLVAPDETTFNYVKGRLHAPKGKDFDDAVAYWKTLQTDEGATFDTVVTLQAEEISPQVTWGTNLGQVISVNDNIPDPASFADPVERASAEKALAYMGLKPGIPLTEVAIDKVFIGSCTNSRIEDLRAAAEIAKGRKVAPGVQALVVPGSGPVKAQAEAEGLDKIFIEAGFEWRLPGCSMCLAMNNDRLNPGERCASTSNRNFEGRQGRGGRTHLVSPAMAAAAAVTGHFADIRNIK</sequence>
<feature type="chain" id="PRO_1000063548" description="3-isopropylmalate dehydratase large subunit">
    <location>
        <begin position="1"/>
        <end position="466"/>
    </location>
</feature>
<feature type="binding site" evidence="1">
    <location>
        <position position="347"/>
    </location>
    <ligand>
        <name>[4Fe-4S] cluster</name>
        <dbReference type="ChEBI" id="CHEBI:49883"/>
    </ligand>
</feature>
<feature type="binding site" evidence="1">
    <location>
        <position position="407"/>
    </location>
    <ligand>
        <name>[4Fe-4S] cluster</name>
        <dbReference type="ChEBI" id="CHEBI:49883"/>
    </ligand>
</feature>
<feature type="binding site" evidence="1">
    <location>
        <position position="410"/>
    </location>
    <ligand>
        <name>[4Fe-4S] cluster</name>
        <dbReference type="ChEBI" id="CHEBI:49883"/>
    </ligand>
</feature>
<dbReference type="EC" id="4.2.1.33" evidence="1"/>
<dbReference type="EMBL" id="CP000800">
    <property type="protein sequence ID" value="ABV19321.1"/>
    <property type="molecule type" value="Genomic_DNA"/>
</dbReference>
<dbReference type="RefSeq" id="WP_001140647.1">
    <property type="nucleotide sequence ID" value="NC_009801.1"/>
</dbReference>
<dbReference type="SMR" id="A7ZHG4"/>
<dbReference type="KEGG" id="ecw:EcE24377A_0075"/>
<dbReference type="HOGENOM" id="CLU_006714_3_4_6"/>
<dbReference type="UniPathway" id="UPA00048">
    <property type="reaction ID" value="UER00071"/>
</dbReference>
<dbReference type="Proteomes" id="UP000001122">
    <property type="component" value="Chromosome"/>
</dbReference>
<dbReference type="GO" id="GO:0003861">
    <property type="term" value="F:3-isopropylmalate dehydratase activity"/>
    <property type="evidence" value="ECO:0007669"/>
    <property type="project" value="UniProtKB-UniRule"/>
</dbReference>
<dbReference type="GO" id="GO:0051539">
    <property type="term" value="F:4 iron, 4 sulfur cluster binding"/>
    <property type="evidence" value="ECO:0007669"/>
    <property type="project" value="UniProtKB-KW"/>
</dbReference>
<dbReference type="GO" id="GO:0046872">
    <property type="term" value="F:metal ion binding"/>
    <property type="evidence" value="ECO:0007669"/>
    <property type="project" value="UniProtKB-KW"/>
</dbReference>
<dbReference type="GO" id="GO:0009098">
    <property type="term" value="P:L-leucine biosynthetic process"/>
    <property type="evidence" value="ECO:0007669"/>
    <property type="project" value="UniProtKB-UniRule"/>
</dbReference>
<dbReference type="CDD" id="cd01583">
    <property type="entry name" value="IPMI"/>
    <property type="match status" value="1"/>
</dbReference>
<dbReference type="FunFam" id="3.30.499.10:FF:000006">
    <property type="entry name" value="3-isopropylmalate dehydratase large subunit"/>
    <property type="match status" value="1"/>
</dbReference>
<dbReference type="FunFam" id="3.30.499.10:FF:000007">
    <property type="entry name" value="3-isopropylmalate dehydratase large subunit"/>
    <property type="match status" value="1"/>
</dbReference>
<dbReference type="Gene3D" id="3.30.499.10">
    <property type="entry name" value="Aconitase, domain 3"/>
    <property type="match status" value="2"/>
</dbReference>
<dbReference type="HAMAP" id="MF_01026">
    <property type="entry name" value="LeuC_type1"/>
    <property type="match status" value="1"/>
</dbReference>
<dbReference type="InterPro" id="IPR004430">
    <property type="entry name" value="3-IsopropMal_deHydase_lsu"/>
</dbReference>
<dbReference type="InterPro" id="IPR015931">
    <property type="entry name" value="Acnase/IPM_dHydase_lsu_aba_1/3"/>
</dbReference>
<dbReference type="InterPro" id="IPR001030">
    <property type="entry name" value="Acoase/IPM_deHydtase_lsu_aba"/>
</dbReference>
<dbReference type="InterPro" id="IPR018136">
    <property type="entry name" value="Aconitase_4Fe-4S_BS"/>
</dbReference>
<dbReference type="InterPro" id="IPR036008">
    <property type="entry name" value="Aconitase_4Fe-4S_dom"/>
</dbReference>
<dbReference type="InterPro" id="IPR050067">
    <property type="entry name" value="IPM_dehydratase_rel_enz"/>
</dbReference>
<dbReference type="InterPro" id="IPR033941">
    <property type="entry name" value="IPMI_cat"/>
</dbReference>
<dbReference type="NCBIfam" id="TIGR00170">
    <property type="entry name" value="leuC"/>
    <property type="match status" value="1"/>
</dbReference>
<dbReference type="NCBIfam" id="NF004016">
    <property type="entry name" value="PRK05478.1"/>
    <property type="match status" value="1"/>
</dbReference>
<dbReference type="NCBIfam" id="NF009116">
    <property type="entry name" value="PRK12466.1"/>
    <property type="match status" value="1"/>
</dbReference>
<dbReference type="PANTHER" id="PTHR43822:SF9">
    <property type="entry name" value="3-ISOPROPYLMALATE DEHYDRATASE"/>
    <property type="match status" value="1"/>
</dbReference>
<dbReference type="PANTHER" id="PTHR43822">
    <property type="entry name" value="HOMOACONITASE, MITOCHONDRIAL-RELATED"/>
    <property type="match status" value="1"/>
</dbReference>
<dbReference type="Pfam" id="PF00330">
    <property type="entry name" value="Aconitase"/>
    <property type="match status" value="1"/>
</dbReference>
<dbReference type="PRINTS" id="PR00415">
    <property type="entry name" value="ACONITASE"/>
</dbReference>
<dbReference type="SUPFAM" id="SSF53732">
    <property type="entry name" value="Aconitase iron-sulfur domain"/>
    <property type="match status" value="1"/>
</dbReference>
<dbReference type="PROSITE" id="PS00450">
    <property type="entry name" value="ACONITASE_1"/>
    <property type="match status" value="1"/>
</dbReference>
<dbReference type="PROSITE" id="PS01244">
    <property type="entry name" value="ACONITASE_2"/>
    <property type="match status" value="1"/>
</dbReference>
<evidence type="ECO:0000255" key="1">
    <source>
        <dbReference type="HAMAP-Rule" id="MF_01026"/>
    </source>
</evidence>
<gene>
    <name evidence="1" type="primary">leuC</name>
    <name type="ordered locus">EcE24377A_0075</name>
</gene>
<proteinExistence type="inferred from homology"/>
<keyword id="KW-0004">4Fe-4S</keyword>
<keyword id="KW-0028">Amino-acid biosynthesis</keyword>
<keyword id="KW-0100">Branched-chain amino acid biosynthesis</keyword>
<keyword id="KW-0408">Iron</keyword>
<keyword id="KW-0411">Iron-sulfur</keyword>
<keyword id="KW-0432">Leucine biosynthesis</keyword>
<keyword id="KW-0456">Lyase</keyword>
<keyword id="KW-0479">Metal-binding</keyword>
<keyword id="KW-1185">Reference proteome</keyword>
<organism>
    <name type="scientific">Escherichia coli O139:H28 (strain E24377A / ETEC)</name>
    <dbReference type="NCBI Taxonomy" id="331111"/>
    <lineage>
        <taxon>Bacteria</taxon>
        <taxon>Pseudomonadati</taxon>
        <taxon>Pseudomonadota</taxon>
        <taxon>Gammaproteobacteria</taxon>
        <taxon>Enterobacterales</taxon>
        <taxon>Enterobacteriaceae</taxon>
        <taxon>Escherichia</taxon>
    </lineage>
</organism>
<comment type="function">
    <text evidence="1">Catalyzes the isomerization between 2-isopropylmalate and 3-isopropylmalate, via the formation of 2-isopropylmaleate.</text>
</comment>
<comment type="catalytic activity">
    <reaction evidence="1">
        <text>(2R,3S)-3-isopropylmalate = (2S)-2-isopropylmalate</text>
        <dbReference type="Rhea" id="RHEA:32287"/>
        <dbReference type="ChEBI" id="CHEBI:1178"/>
        <dbReference type="ChEBI" id="CHEBI:35121"/>
        <dbReference type="EC" id="4.2.1.33"/>
    </reaction>
</comment>
<comment type="cofactor">
    <cofactor evidence="1">
        <name>[4Fe-4S] cluster</name>
        <dbReference type="ChEBI" id="CHEBI:49883"/>
    </cofactor>
    <text evidence="1">Binds 1 [4Fe-4S] cluster per subunit.</text>
</comment>
<comment type="pathway">
    <text evidence="1">Amino-acid biosynthesis; L-leucine biosynthesis; L-leucine from 3-methyl-2-oxobutanoate: step 2/4.</text>
</comment>
<comment type="subunit">
    <text evidence="1">Heterodimer of LeuC and LeuD.</text>
</comment>
<comment type="similarity">
    <text evidence="1">Belongs to the aconitase/IPM isomerase family. LeuC type 1 subfamily.</text>
</comment>
<name>LEUC_ECO24</name>
<accession>A7ZHG4</accession>
<reference key="1">
    <citation type="journal article" date="2008" name="J. Bacteriol.">
        <title>The pangenome structure of Escherichia coli: comparative genomic analysis of E. coli commensal and pathogenic isolates.</title>
        <authorList>
            <person name="Rasko D.A."/>
            <person name="Rosovitz M.J."/>
            <person name="Myers G.S.A."/>
            <person name="Mongodin E.F."/>
            <person name="Fricke W.F."/>
            <person name="Gajer P."/>
            <person name="Crabtree J."/>
            <person name="Sebaihia M."/>
            <person name="Thomson N.R."/>
            <person name="Chaudhuri R."/>
            <person name="Henderson I.R."/>
            <person name="Sperandio V."/>
            <person name="Ravel J."/>
        </authorList>
    </citation>
    <scope>NUCLEOTIDE SEQUENCE [LARGE SCALE GENOMIC DNA]</scope>
    <source>
        <strain>E24377A / ETEC</strain>
    </source>
</reference>